<evidence type="ECO:0000255" key="1">
    <source>
        <dbReference type="HAMAP-Rule" id="MF_00551"/>
    </source>
</evidence>
<protein>
    <recommendedName>
        <fullName evidence="1">Uridine kinase</fullName>
        <ecNumber evidence="1">2.7.1.48</ecNumber>
    </recommendedName>
    <alternativeName>
        <fullName evidence="1">Cytidine monophosphokinase</fullName>
    </alternativeName>
    <alternativeName>
        <fullName evidence="1">Uridine monophosphokinase</fullName>
    </alternativeName>
</protein>
<comment type="catalytic activity">
    <reaction evidence="1">
        <text>uridine + ATP = UMP + ADP + H(+)</text>
        <dbReference type="Rhea" id="RHEA:16825"/>
        <dbReference type="ChEBI" id="CHEBI:15378"/>
        <dbReference type="ChEBI" id="CHEBI:16704"/>
        <dbReference type="ChEBI" id="CHEBI:30616"/>
        <dbReference type="ChEBI" id="CHEBI:57865"/>
        <dbReference type="ChEBI" id="CHEBI:456216"/>
        <dbReference type="EC" id="2.7.1.48"/>
    </reaction>
</comment>
<comment type="catalytic activity">
    <reaction evidence="1">
        <text>cytidine + ATP = CMP + ADP + H(+)</text>
        <dbReference type="Rhea" id="RHEA:24674"/>
        <dbReference type="ChEBI" id="CHEBI:15378"/>
        <dbReference type="ChEBI" id="CHEBI:17562"/>
        <dbReference type="ChEBI" id="CHEBI:30616"/>
        <dbReference type="ChEBI" id="CHEBI:60377"/>
        <dbReference type="ChEBI" id="CHEBI:456216"/>
        <dbReference type="EC" id="2.7.1.48"/>
    </reaction>
</comment>
<comment type="pathway">
    <text evidence="1">Pyrimidine metabolism; CTP biosynthesis via salvage pathway; CTP from cytidine: step 1/3.</text>
</comment>
<comment type="pathway">
    <text evidence="1">Pyrimidine metabolism; UMP biosynthesis via salvage pathway; UMP from uridine: step 1/1.</text>
</comment>
<comment type="subcellular location">
    <subcellularLocation>
        <location evidence="1">Cytoplasm</location>
    </subcellularLocation>
</comment>
<comment type="similarity">
    <text evidence="1">Belongs to the uridine kinase family.</text>
</comment>
<gene>
    <name evidence="1" type="primary">udk</name>
    <name type="ordered locus">BA_4608</name>
    <name type="ordered locus">GBAA_4608</name>
    <name type="ordered locus">BAS4276</name>
</gene>
<keyword id="KW-0067">ATP-binding</keyword>
<keyword id="KW-0963">Cytoplasm</keyword>
<keyword id="KW-0418">Kinase</keyword>
<keyword id="KW-0547">Nucleotide-binding</keyword>
<keyword id="KW-1185">Reference proteome</keyword>
<keyword id="KW-0808">Transferase</keyword>
<organism>
    <name type="scientific">Bacillus anthracis</name>
    <dbReference type="NCBI Taxonomy" id="1392"/>
    <lineage>
        <taxon>Bacteria</taxon>
        <taxon>Bacillati</taxon>
        <taxon>Bacillota</taxon>
        <taxon>Bacilli</taxon>
        <taxon>Bacillales</taxon>
        <taxon>Bacillaceae</taxon>
        <taxon>Bacillus</taxon>
        <taxon>Bacillus cereus group</taxon>
    </lineage>
</organism>
<reference key="1">
    <citation type="journal article" date="2003" name="Nature">
        <title>The genome sequence of Bacillus anthracis Ames and comparison to closely related bacteria.</title>
        <authorList>
            <person name="Read T.D."/>
            <person name="Peterson S.N."/>
            <person name="Tourasse N.J."/>
            <person name="Baillie L.W."/>
            <person name="Paulsen I.T."/>
            <person name="Nelson K.E."/>
            <person name="Tettelin H."/>
            <person name="Fouts D.E."/>
            <person name="Eisen J.A."/>
            <person name="Gill S.R."/>
            <person name="Holtzapple E.K."/>
            <person name="Okstad O.A."/>
            <person name="Helgason E."/>
            <person name="Rilstone J."/>
            <person name="Wu M."/>
            <person name="Kolonay J.F."/>
            <person name="Beanan M.J."/>
            <person name="Dodson R.J."/>
            <person name="Brinkac L.M."/>
            <person name="Gwinn M.L."/>
            <person name="DeBoy R.T."/>
            <person name="Madpu R."/>
            <person name="Daugherty S.C."/>
            <person name="Durkin A.S."/>
            <person name="Haft D.H."/>
            <person name="Nelson W.C."/>
            <person name="Peterson J.D."/>
            <person name="Pop M."/>
            <person name="Khouri H.M."/>
            <person name="Radune D."/>
            <person name="Benton J.L."/>
            <person name="Mahamoud Y."/>
            <person name="Jiang L."/>
            <person name="Hance I.R."/>
            <person name="Weidman J.F."/>
            <person name="Berry K.J."/>
            <person name="Plaut R.D."/>
            <person name="Wolf A.M."/>
            <person name="Watkins K.L."/>
            <person name="Nierman W.C."/>
            <person name="Hazen A."/>
            <person name="Cline R.T."/>
            <person name="Redmond C."/>
            <person name="Thwaite J.E."/>
            <person name="White O."/>
            <person name="Salzberg S.L."/>
            <person name="Thomason B."/>
            <person name="Friedlander A.M."/>
            <person name="Koehler T.M."/>
            <person name="Hanna P.C."/>
            <person name="Kolstoe A.-B."/>
            <person name="Fraser C.M."/>
        </authorList>
    </citation>
    <scope>NUCLEOTIDE SEQUENCE [LARGE SCALE GENOMIC DNA]</scope>
    <source>
        <strain>Ames / isolate Porton</strain>
    </source>
</reference>
<reference key="2">
    <citation type="submission" date="2004-01" db="EMBL/GenBank/DDBJ databases">
        <title>Complete genome sequence of Bacillus anthracis Sterne.</title>
        <authorList>
            <person name="Brettin T.S."/>
            <person name="Bruce D."/>
            <person name="Challacombe J.F."/>
            <person name="Gilna P."/>
            <person name="Han C."/>
            <person name="Hill K."/>
            <person name="Hitchcock P."/>
            <person name="Jackson P."/>
            <person name="Keim P."/>
            <person name="Longmire J."/>
            <person name="Lucas S."/>
            <person name="Okinaka R."/>
            <person name="Richardson P."/>
            <person name="Rubin E."/>
            <person name="Tice H."/>
        </authorList>
    </citation>
    <scope>NUCLEOTIDE SEQUENCE [LARGE SCALE GENOMIC DNA]</scope>
    <source>
        <strain>Sterne</strain>
    </source>
</reference>
<reference key="3">
    <citation type="journal article" date="2009" name="J. Bacteriol.">
        <title>The complete genome sequence of Bacillus anthracis Ames 'Ancestor'.</title>
        <authorList>
            <person name="Ravel J."/>
            <person name="Jiang L."/>
            <person name="Stanley S.T."/>
            <person name="Wilson M.R."/>
            <person name="Decker R.S."/>
            <person name="Read T.D."/>
            <person name="Worsham P."/>
            <person name="Keim P.S."/>
            <person name="Salzberg S.L."/>
            <person name="Fraser-Liggett C.M."/>
            <person name="Rasko D.A."/>
        </authorList>
    </citation>
    <scope>NUCLEOTIDE SEQUENCE [LARGE SCALE GENOMIC DNA]</scope>
    <source>
        <strain>Ames ancestor</strain>
    </source>
</reference>
<name>URK_BACAN</name>
<sequence>MGTNKPVVIGIAGGSGSGKTSVTKAIFDHFKGHSILILEQDYYYKDQSHLPMEERLKTNYDHPLAFDNDLLIEHLQQLLAYKQVDKPVYDYTLHTRSEEIIPVEPKDVIILEGILILEDPRLCELMDIKLFVDTDADLRILRRMQRDIKERGRTMDSVIDQYVNVVRPMHNQFIEPSKKFADIIIPEGGQNHVAIDSMVTKIATILEQKVNL</sequence>
<accession>Q81LK8</accession>
<accession>Q6HT14</accession>
<accession>Q6KMA3</accession>
<proteinExistence type="inferred from homology"/>
<dbReference type="EC" id="2.7.1.48" evidence="1"/>
<dbReference type="EMBL" id="AE016879">
    <property type="protein sequence ID" value="AAP28313.1"/>
    <property type="molecule type" value="Genomic_DNA"/>
</dbReference>
<dbReference type="EMBL" id="AE017334">
    <property type="protein sequence ID" value="AAT33729.1"/>
    <property type="molecule type" value="Genomic_DNA"/>
</dbReference>
<dbReference type="EMBL" id="AE017225">
    <property type="protein sequence ID" value="AAT56575.1"/>
    <property type="molecule type" value="Genomic_DNA"/>
</dbReference>
<dbReference type="RefSeq" id="NP_846827.1">
    <property type="nucleotide sequence ID" value="NC_003997.3"/>
</dbReference>
<dbReference type="RefSeq" id="WP_000537086.1">
    <property type="nucleotide sequence ID" value="NZ_WXXJ01000027.1"/>
</dbReference>
<dbReference type="RefSeq" id="YP_030524.1">
    <property type="nucleotide sequence ID" value="NC_005945.1"/>
</dbReference>
<dbReference type="SMR" id="Q81LK8"/>
<dbReference type="STRING" id="261594.GBAA_4608"/>
<dbReference type="DNASU" id="1088637"/>
<dbReference type="GeneID" id="45024253"/>
<dbReference type="KEGG" id="ban:BA_4608"/>
<dbReference type="KEGG" id="banh:HYU01_22475"/>
<dbReference type="KEGG" id="bar:GBAA_4608"/>
<dbReference type="KEGG" id="bat:BAS4276"/>
<dbReference type="PATRIC" id="fig|198094.11.peg.4575"/>
<dbReference type="eggNOG" id="COG0572">
    <property type="taxonomic scope" value="Bacteria"/>
</dbReference>
<dbReference type="HOGENOM" id="CLU_021278_1_2_9"/>
<dbReference type="OMA" id="TVKPMHE"/>
<dbReference type="OrthoDB" id="9777642at2"/>
<dbReference type="UniPathway" id="UPA00574">
    <property type="reaction ID" value="UER00637"/>
</dbReference>
<dbReference type="UniPathway" id="UPA00579">
    <property type="reaction ID" value="UER00640"/>
</dbReference>
<dbReference type="Proteomes" id="UP000000427">
    <property type="component" value="Chromosome"/>
</dbReference>
<dbReference type="Proteomes" id="UP000000594">
    <property type="component" value="Chromosome"/>
</dbReference>
<dbReference type="GO" id="GO:0005737">
    <property type="term" value="C:cytoplasm"/>
    <property type="evidence" value="ECO:0007669"/>
    <property type="project" value="UniProtKB-SubCell"/>
</dbReference>
<dbReference type="GO" id="GO:0005524">
    <property type="term" value="F:ATP binding"/>
    <property type="evidence" value="ECO:0007669"/>
    <property type="project" value="UniProtKB-UniRule"/>
</dbReference>
<dbReference type="GO" id="GO:0043771">
    <property type="term" value="F:cytidine kinase activity"/>
    <property type="evidence" value="ECO:0007669"/>
    <property type="project" value="RHEA"/>
</dbReference>
<dbReference type="GO" id="GO:0004849">
    <property type="term" value="F:uridine kinase activity"/>
    <property type="evidence" value="ECO:0007669"/>
    <property type="project" value="UniProtKB-UniRule"/>
</dbReference>
<dbReference type="GO" id="GO:0044211">
    <property type="term" value="P:CTP salvage"/>
    <property type="evidence" value="ECO:0007669"/>
    <property type="project" value="UniProtKB-UniRule"/>
</dbReference>
<dbReference type="GO" id="GO:0044206">
    <property type="term" value="P:UMP salvage"/>
    <property type="evidence" value="ECO:0007669"/>
    <property type="project" value="UniProtKB-UniRule"/>
</dbReference>
<dbReference type="CDD" id="cd02023">
    <property type="entry name" value="UMPK"/>
    <property type="match status" value="1"/>
</dbReference>
<dbReference type="Gene3D" id="3.40.50.300">
    <property type="entry name" value="P-loop containing nucleotide triphosphate hydrolases"/>
    <property type="match status" value="1"/>
</dbReference>
<dbReference type="HAMAP" id="MF_00551">
    <property type="entry name" value="Uridine_kinase"/>
    <property type="match status" value="1"/>
</dbReference>
<dbReference type="InterPro" id="IPR027417">
    <property type="entry name" value="P-loop_NTPase"/>
</dbReference>
<dbReference type="InterPro" id="IPR006083">
    <property type="entry name" value="PRK/URK"/>
</dbReference>
<dbReference type="InterPro" id="IPR026008">
    <property type="entry name" value="Uridine_kinase"/>
</dbReference>
<dbReference type="InterPro" id="IPR000764">
    <property type="entry name" value="Uridine_kinase-like"/>
</dbReference>
<dbReference type="NCBIfam" id="NF004018">
    <property type="entry name" value="PRK05480.1"/>
    <property type="match status" value="1"/>
</dbReference>
<dbReference type="NCBIfam" id="TIGR00235">
    <property type="entry name" value="udk"/>
    <property type="match status" value="1"/>
</dbReference>
<dbReference type="PANTHER" id="PTHR10285">
    <property type="entry name" value="URIDINE KINASE"/>
    <property type="match status" value="1"/>
</dbReference>
<dbReference type="Pfam" id="PF00485">
    <property type="entry name" value="PRK"/>
    <property type="match status" value="1"/>
</dbReference>
<dbReference type="PRINTS" id="PR00988">
    <property type="entry name" value="URIDINKINASE"/>
</dbReference>
<dbReference type="SUPFAM" id="SSF52540">
    <property type="entry name" value="P-loop containing nucleoside triphosphate hydrolases"/>
    <property type="match status" value="1"/>
</dbReference>
<feature type="chain" id="PRO_1000017862" description="Uridine kinase">
    <location>
        <begin position="1"/>
        <end position="212"/>
    </location>
</feature>
<feature type="binding site" evidence="1">
    <location>
        <begin position="13"/>
        <end position="20"/>
    </location>
    <ligand>
        <name>ATP</name>
        <dbReference type="ChEBI" id="CHEBI:30616"/>
    </ligand>
</feature>